<reference key="1">
    <citation type="journal article" date="1992" name="J. Mol. Biol.">
        <title>DNA sequence analysis of 66 kb of the human MHC class II region encoding a cluster of genes for antigen processing.</title>
        <authorList>
            <person name="Beck S."/>
            <person name="Kelly A."/>
            <person name="Radley E."/>
            <person name="Khurshid F."/>
            <person name="Alderton R.P."/>
            <person name="Trowsdale J."/>
        </authorList>
    </citation>
    <scope>NUCLEOTIDE SEQUENCE [GENOMIC DNA] (ALLELE TAP2*01:01) (ISOFORM 1)</scope>
    <scope>POLYMORPHISM</scope>
</reference>
<reference key="2">
    <citation type="journal article" date="1992" name="Proc. Natl. Acad. Sci. U.S.A.">
        <title>Polymorphism in a second ABC transporter gene located within the class II region of the human major histocompatibility complex.</title>
        <authorList>
            <person name="Powis S.H."/>
            <person name="Mockridge I."/>
            <person name="Kelly A."/>
            <person name="Kerr L.-A."/>
            <person name="Glynne R.J."/>
            <person name="Gileadi U."/>
            <person name="Beck S."/>
            <person name="Trowsdale J."/>
        </authorList>
    </citation>
    <scope>NUCLEOTIDE SEQUENCE [MRNA] (ALLELE TAP2*01:01/TAP2*02:01) (ISOFORM 1)</scope>
    <scope>POLYMORPHISM</scope>
</reference>
<reference key="3">
    <citation type="journal article" date="1991" name="Proc. Natl. Acad. Sci. U.S.A.">
        <title>Two putative subunits of a peptide pump encoded in the human major histocompatibility complex class II region.</title>
        <authorList>
            <person name="Bahram S."/>
            <person name="Arnold D."/>
            <person name="Bresnahan M."/>
            <person name="Strominger J.L."/>
            <person name="Spies T."/>
        </authorList>
    </citation>
    <scope>NUCLEOTIDE SEQUENCE [MRNA] (ALLELE TAP2*02:01) (ISOFORM 1)</scope>
    <scope>POLYMORPHISM</scope>
</reference>
<reference key="4">
    <citation type="journal article" date="1993" name="Immunogenetics">
        <title>Alleles and haplotypes of the MHC-encoded ABC transporters TAP1 and TAP2.</title>
        <authorList>
            <person name="Powis S.H."/>
            <person name="Tonks S."/>
            <person name="Mockridge I."/>
            <person name="Kelly A.P."/>
            <person name="Bodmer J.G."/>
            <person name="Trowsdale J."/>
        </authorList>
    </citation>
    <scope>NUCLEOTIDE SEQUENCE [MRNA] (ALLELE TAP2*01:02) (ISOFORM 1)</scope>
    <scope>POLYMORPHISM</scope>
</reference>
<reference key="5">
    <citation type="journal article" date="1997" name="Arthritis Rheum.">
        <title>Association of a new allele of the TAP2 gene, TAP2*Bky2 (Val577), with susceptibility to Sjogren's syndrome.</title>
        <authorList>
            <person name="Kumagai S."/>
            <person name="Kanagawa S."/>
            <person name="Morinobu A."/>
            <person name="Takada M."/>
            <person name="Nakamura K."/>
            <person name="Sugai S."/>
            <person name="Maruya E."/>
            <person name="Saji H."/>
        </authorList>
    </citation>
    <scope>NUCLEOTIDE SEQUENCE [MRNA] (ALLELE TAP2*BKY2) (ISOFORM 1)</scope>
    <scope>VARIANT TAP2*BKY2 VAL-577</scope>
    <scope>POLYMORPHISM</scope>
    <source>
        <tissue>Blood</tissue>
    </source>
</reference>
<reference key="6">
    <citation type="journal article" date="1999" name="J. Immunol.">
        <title>Novel splicing of the human MHC-encoded peptide transporter confers unique properties.</title>
        <authorList>
            <person name="Yan G."/>
            <person name="Shi L."/>
            <person name="Faustman D."/>
        </authorList>
    </citation>
    <scope>NUCLEOTIDE SEQUENCE [MRNA] (ISOFORM 2)</scope>
    <scope>VARIANT ILE-379</scope>
    <source>
        <tissue>Spleen</tissue>
    </source>
</reference>
<reference key="7">
    <citation type="journal article" date="1996" name="J. Mol. Biol.">
        <title>Evolutionary dynamics of non-coding sequences within the class II region of the human MHC.</title>
        <authorList>
            <person name="Beck S."/>
            <person name="Abdulla S."/>
            <person name="Alderton R.P."/>
            <person name="Glynne R.J."/>
            <person name="Gut I.G."/>
            <person name="Hosking L.K."/>
            <person name="Jackson A."/>
            <person name="Kelly A."/>
            <person name="Newell W.R."/>
            <person name="Sanseau P."/>
            <person name="Radley E."/>
            <person name="Thorpe K.L."/>
            <person name="Trowsdale J."/>
        </authorList>
    </citation>
    <scope>NUCLEOTIDE SEQUENCE [GENOMIC DNA] (ALLELE TAP2*01:01) (ISOFORM 1)</scope>
    <scope>POLYMORPHISM</scope>
</reference>
<reference key="8">
    <citation type="submission" date="2005-04" db="EMBL/GenBank/DDBJ databases">
        <authorList>
            <person name="Suzuki Y."/>
            <person name="Sugano S."/>
            <person name="Totoki Y."/>
            <person name="Toyoda A."/>
            <person name="Takeda T."/>
            <person name="Sakaki Y."/>
            <person name="Tanaka A."/>
            <person name="Yokoyama S."/>
        </authorList>
    </citation>
    <scope>NUCLEOTIDE SEQUENCE [LARGE SCALE MRNA] (ALLELE TAP2*BKY2) (ISOFORM 1)</scope>
    <source>
        <tissue>Liver</tissue>
        <tissue>Synovium</tissue>
    </source>
</reference>
<reference key="9">
    <citation type="journal article" date="2003" name="Nature">
        <title>The DNA sequence and analysis of human chromosome 6.</title>
        <authorList>
            <person name="Mungall A.J."/>
            <person name="Palmer S.A."/>
            <person name="Sims S.K."/>
            <person name="Edwards C.A."/>
            <person name="Ashurst J.L."/>
            <person name="Wilming L."/>
            <person name="Jones M.C."/>
            <person name="Horton R."/>
            <person name="Hunt S.E."/>
            <person name="Scott C.E."/>
            <person name="Gilbert J.G.R."/>
            <person name="Clamp M.E."/>
            <person name="Bethel G."/>
            <person name="Milne S."/>
            <person name="Ainscough R."/>
            <person name="Almeida J.P."/>
            <person name="Ambrose K.D."/>
            <person name="Andrews T.D."/>
            <person name="Ashwell R.I.S."/>
            <person name="Babbage A.K."/>
            <person name="Bagguley C.L."/>
            <person name="Bailey J."/>
            <person name="Banerjee R."/>
            <person name="Barker D.J."/>
            <person name="Barlow K.F."/>
            <person name="Bates K."/>
            <person name="Beare D.M."/>
            <person name="Beasley H."/>
            <person name="Beasley O."/>
            <person name="Bird C.P."/>
            <person name="Blakey S.E."/>
            <person name="Bray-Allen S."/>
            <person name="Brook J."/>
            <person name="Brown A.J."/>
            <person name="Brown J.Y."/>
            <person name="Burford D.C."/>
            <person name="Burrill W."/>
            <person name="Burton J."/>
            <person name="Carder C."/>
            <person name="Carter N.P."/>
            <person name="Chapman J.C."/>
            <person name="Clark S.Y."/>
            <person name="Clark G."/>
            <person name="Clee C.M."/>
            <person name="Clegg S."/>
            <person name="Cobley V."/>
            <person name="Collier R.E."/>
            <person name="Collins J.E."/>
            <person name="Colman L.K."/>
            <person name="Corby N.R."/>
            <person name="Coville G.J."/>
            <person name="Culley K.M."/>
            <person name="Dhami P."/>
            <person name="Davies J."/>
            <person name="Dunn M."/>
            <person name="Earthrowl M.E."/>
            <person name="Ellington A.E."/>
            <person name="Evans K.A."/>
            <person name="Faulkner L."/>
            <person name="Francis M.D."/>
            <person name="Frankish A."/>
            <person name="Frankland J."/>
            <person name="French L."/>
            <person name="Garner P."/>
            <person name="Garnett J."/>
            <person name="Ghori M.J."/>
            <person name="Gilby L.M."/>
            <person name="Gillson C.J."/>
            <person name="Glithero R.J."/>
            <person name="Grafham D.V."/>
            <person name="Grant M."/>
            <person name="Gribble S."/>
            <person name="Griffiths C."/>
            <person name="Griffiths M.N.D."/>
            <person name="Hall R."/>
            <person name="Halls K.S."/>
            <person name="Hammond S."/>
            <person name="Harley J.L."/>
            <person name="Hart E.A."/>
            <person name="Heath P.D."/>
            <person name="Heathcott R."/>
            <person name="Holmes S.J."/>
            <person name="Howden P.J."/>
            <person name="Howe K.L."/>
            <person name="Howell G.R."/>
            <person name="Huckle E."/>
            <person name="Humphray S.J."/>
            <person name="Humphries M.D."/>
            <person name="Hunt A.R."/>
            <person name="Johnson C.M."/>
            <person name="Joy A.A."/>
            <person name="Kay M."/>
            <person name="Keenan S.J."/>
            <person name="Kimberley A.M."/>
            <person name="King A."/>
            <person name="Laird G.K."/>
            <person name="Langford C."/>
            <person name="Lawlor S."/>
            <person name="Leongamornlert D.A."/>
            <person name="Leversha M."/>
            <person name="Lloyd C.R."/>
            <person name="Lloyd D.M."/>
            <person name="Loveland J.E."/>
            <person name="Lovell J."/>
            <person name="Martin S."/>
            <person name="Mashreghi-Mohammadi M."/>
            <person name="Maslen G.L."/>
            <person name="Matthews L."/>
            <person name="McCann O.T."/>
            <person name="McLaren S.J."/>
            <person name="McLay K."/>
            <person name="McMurray A."/>
            <person name="Moore M.J.F."/>
            <person name="Mullikin J.C."/>
            <person name="Niblett D."/>
            <person name="Nickerson T."/>
            <person name="Novik K.L."/>
            <person name="Oliver K."/>
            <person name="Overton-Larty E.K."/>
            <person name="Parker A."/>
            <person name="Patel R."/>
            <person name="Pearce A.V."/>
            <person name="Peck A.I."/>
            <person name="Phillimore B.J.C.T."/>
            <person name="Phillips S."/>
            <person name="Plumb R.W."/>
            <person name="Porter K.M."/>
            <person name="Ramsey Y."/>
            <person name="Ranby S.A."/>
            <person name="Rice C.M."/>
            <person name="Ross M.T."/>
            <person name="Searle S.M."/>
            <person name="Sehra H.K."/>
            <person name="Sheridan E."/>
            <person name="Skuce C.D."/>
            <person name="Smith S."/>
            <person name="Smith M."/>
            <person name="Spraggon L."/>
            <person name="Squares S.L."/>
            <person name="Steward C.A."/>
            <person name="Sycamore N."/>
            <person name="Tamlyn-Hall G."/>
            <person name="Tester J."/>
            <person name="Theaker A.J."/>
            <person name="Thomas D.W."/>
            <person name="Thorpe A."/>
            <person name="Tracey A."/>
            <person name="Tromans A."/>
            <person name="Tubby B."/>
            <person name="Wall M."/>
            <person name="Wallis J.M."/>
            <person name="West A.P."/>
            <person name="White S.S."/>
            <person name="Whitehead S.L."/>
            <person name="Whittaker H."/>
            <person name="Wild A."/>
            <person name="Willey D.J."/>
            <person name="Wilmer T.E."/>
            <person name="Wood J.M."/>
            <person name="Wray P.W."/>
            <person name="Wyatt J.C."/>
            <person name="Young L."/>
            <person name="Younger R.M."/>
            <person name="Bentley D.R."/>
            <person name="Coulson A."/>
            <person name="Durbin R.M."/>
            <person name="Hubbard T."/>
            <person name="Sulston J.E."/>
            <person name="Dunham I."/>
            <person name="Rogers J."/>
            <person name="Beck S."/>
        </authorList>
    </citation>
    <scope>NUCLEOTIDE SEQUENCE [LARGE SCALE GENOMIC DNA] (ALLELES TAP2*03A AND TAP2*BKY2)</scope>
</reference>
<reference key="10">
    <citation type="journal article" date="2004" name="Genome Res.">
        <title>The status, quality, and expansion of the NIH full-length cDNA project: the Mammalian Gene Collection (MGC).</title>
        <authorList>
            <consortium name="The MGC Project Team"/>
        </authorList>
    </citation>
    <scope>NUCLEOTIDE SEQUENCE [LARGE SCALE MRNA] (ISOFORM 1)</scope>
    <source>
        <tissue>Brain</tissue>
    </source>
</reference>
<reference key="11">
    <citation type="journal article" date="1995" name="Tissue Antigens">
        <title>Novel human TAP2*103 allele shows further polymorphism in the ATP-binding domain.</title>
        <authorList>
            <person name="Cano P."/>
            <person name="Baxter-Lowe L.A."/>
        </authorList>
    </citation>
    <scope>NUCLEOTIDE SEQUENCE [MRNA] OF 65-686 (ALLELE TAP2*01:03) (ISOFORM 1)</scope>
    <source>
        <tissue>Blood</tissue>
    </source>
</reference>
<reference key="12">
    <citation type="journal article" date="1998" name="Tissue Antigens">
        <title>New TAP2 polymorphisms in Africans.</title>
        <authorList>
            <person name="Tang J."/>
            <person name="Allen S."/>
            <person name="Karita E."/>
            <person name="Musonda R."/>
            <person name="Kaslow R.A."/>
        </authorList>
    </citation>
    <scope>NUCLEOTIDE SEQUENCE [GENOMIC DNA] OF 204-686 (ISOFORM 1)</scope>
    <scope>VARIANTS THR-374 AND ILE-467</scope>
</reference>
<reference key="13">
    <citation type="submission" date="1993-02" db="EMBL/GenBank/DDBJ databases">
        <authorList>
            <person name="Singal D.P."/>
            <person name="Ye M."/>
            <person name="D'Souza M."/>
        </authorList>
    </citation>
    <scope>NUCLEOTIDE SEQUENCE [MRNA] OF 517-645 (ALLELE TAP2*01:01/TAP2*01:02) (ISOFORM 1)</scope>
</reference>
<reference key="14">
    <citation type="journal article" date="1994" name="Clin. Exp. Rheumatol.">
        <title>Polymorphisms in the TAP2 gene and their association with rheumatoid arthritis.</title>
        <authorList>
            <person name="Singal D.P."/>
            <person name="Ye M."/>
            <person name="Qiu X."/>
            <person name="D'Souza M."/>
        </authorList>
    </citation>
    <scope>NUCLEOTIDE SEQUENCE [MRNA] OF 517-645 (ALLELE TAP2*01:01/TAP2*01:02) (ISOFORM 1)</scope>
</reference>
<reference key="15">
    <citation type="journal article" date="1992" name="Nature">
        <title>Location of MHC-encoded transporters in the endoplasmic reticulum and cis-Golgi.</title>
        <authorList>
            <person name="Kleijmeer M.J."/>
            <person name="Kelly A."/>
            <person name="Geuze H.J."/>
            <person name="Slot J.W."/>
            <person name="Townsend A."/>
            <person name="Trowsdale J."/>
        </authorList>
    </citation>
    <scope>SUBCELLULAR LOCATION</scope>
</reference>
<reference key="16">
    <citation type="journal article" date="1992" name="Nature">
        <title>Assembly and function of the two ABC transporter proteins encoded in the human major histocompatibility complex.</title>
        <authorList>
            <person name="Kelly A."/>
            <person name="Powis S.H."/>
            <person name="Kerr L.A."/>
            <person name="Mockridge I."/>
            <person name="Elliott T."/>
            <person name="Bastin J."/>
            <person name="Uchanska-Ziegler B."/>
            <person name="Ziegler A."/>
            <person name="Trowsdale J."/>
            <person name="Townsend A."/>
        </authorList>
    </citation>
    <scope>FUNCTION</scope>
    <scope>INTERACTION WITH TAP1</scope>
</reference>
<reference key="17">
    <citation type="journal article" date="1995" name="J. Exp. Med.">
        <title>The peptide-binding motif for the human transporter associated with antigen processing.</title>
        <authorList>
            <person name="van Endert P.M."/>
            <person name="Riganelli D."/>
            <person name="Greco G."/>
            <person name="Fleischhauer K."/>
            <person name="Sidney J."/>
            <person name="Sette A."/>
            <person name="Bach J.F."/>
        </authorList>
    </citation>
    <scope>FUNCTION</scope>
</reference>
<reference key="18">
    <citation type="journal article" date="1995" name="Nature">
        <title>A viral inhibitor of peptide transporters for antigen presentation.</title>
        <authorList>
            <person name="Frueh K."/>
            <person name="Ahn K."/>
            <person name="Djaballah H."/>
            <person name="Sempe P."/>
            <person name="van Endert P.M."/>
            <person name="Tampe R."/>
            <person name="Peterson P.A."/>
            <person name="Yang Y."/>
        </authorList>
    </citation>
    <scope>INTERACTION WITH HERPES SIMPLEX VIRUS US12/ICP47 (MICROBIAL INFECTION)</scope>
</reference>
<reference key="19">
    <citation type="journal article" date="1996" name="Curr. Biol.">
        <title>Point mutations in the alpha 2 domain of HLA-A2.1 define a functionally relevant interaction with TAP.</title>
        <authorList>
            <person name="Lewis J.W."/>
            <person name="Neisig A."/>
            <person name="Neefjes J."/>
            <person name="Elliott T."/>
        </authorList>
    </citation>
    <scope>INTERACTION WITH HLA-A*02-B2M COMPLEX</scope>
</reference>
<reference key="20">
    <citation type="journal article" date="1996" name="Immunity">
        <title>A point mutation in HLA-A*0201 results in failure to bind the TAP complex and to present virus-derived peptides to CTL.</title>
        <authorList>
            <person name="Peace-Brewer A.L."/>
            <person name="Tussey L.G."/>
            <person name="Matsui M."/>
            <person name="Li G."/>
            <person name="Quinn D.G."/>
            <person name="Frelinger J.A."/>
        </authorList>
    </citation>
    <scope>INTERACTION WITH HLA-A*02-B2M COMPLEX</scope>
</reference>
<reference key="21">
    <citation type="journal article" date="1996" name="J. Immunol.">
        <title>Multiple regions of the transporter associated with antigen processing (TAP) contribute to its peptide binding site.</title>
        <authorList>
            <person name="Nijenhuis M."/>
            <person name="Hammerling G.J."/>
        </authorList>
    </citation>
    <scope>PEPTIDE-BINDING SITE</scope>
</reference>
<reference key="22">
    <citation type="journal article" date="1996" name="EMBO J.">
        <title>Molecular mechanism and species specificity of TAP inhibition by herpes simplex virus ICP47.</title>
        <authorList>
            <person name="Ahn K."/>
            <person name="Meyer T.H."/>
            <person name="Uebel S."/>
            <person name="Sempe P."/>
            <person name="Djaballah H."/>
            <person name="Yang Y."/>
            <person name="Peterson P.A."/>
            <person name="Frueh K."/>
            <person name="Tampe R."/>
        </authorList>
    </citation>
    <scope>ACTIVITY REGULATION (MICROBIAL INFECTION)</scope>
    <scope>INHIBITION BY US12/ICP47</scope>
</reference>
<reference key="23">
    <citation type="journal article" date="1997" name="Immunity">
        <title>The ER-luminal domain of the HCMV glycoprotein US6 inhibits peptide translocation by TAP.</title>
        <authorList>
            <person name="Ahn K."/>
            <person name="Gruhler A."/>
            <person name="Galocha B."/>
            <person name="Jones T.R."/>
            <person name="Wiertz E.J.H.J."/>
            <person name="Ploegh H.L."/>
            <person name="Peterson P.A."/>
            <person name="Yang Y."/>
            <person name="Frueh K."/>
        </authorList>
    </citation>
    <scope>ACTIVITY REGULATION (MICROBIAL INFECTION)</scope>
    <scope>INHIBITION BY US6 GLYCOPROTEIN</scope>
</reference>
<reference key="24">
    <citation type="journal article" date="1997" name="Proc. Natl. Acad. Sci. U.S.A.">
        <title>Recognition principle of the TAP transporter disclosed by combinatorial peptide libraries.</title>
        <authorList>
            <person name="Uebel S."/>
            <person name="Kraas W."/>
            <person name="Kienle S."/>
            <person name="Wiesmueller K.H."/>
            <person name="Jung G."/>
            <person name="Tampe R."/>
        </authorList>
    </citation>
    <scope>FUNCTION</scope>
</reference>
<reference key="25">
    <citation type="journal article" date="1998" name="Curr. Biol.">
        <title>TAP- and tapasin-dependent HLA-E surface expression correlates with the binding of an MHC class I leader peptide.</title>
        <authorList>
            <person name="Braud V.M."/>
            <person name="Allan D.S."/>
            <person name="Wilson D."/>
            <person name="McMichael A.J."/>
        </authorList>
    </citation>
    <scope>SUBUNIT</scope>
    <scope>INTERACTION WITH HLA-E-B2M</scope>
</reference>
<reference key="26">
    <citation type="journal article" date="2001" name="EMBO J.">
        <title>The human cytomegalovirus gene product US6 inhibits ATP binding by TAP.</title>
        <authorList>
            <person name="Hewitt E.W."/>
            <person name="Gupta S.S."/>
            <person name="Lehner P.J."/>
        </authorList>
    </citation>
    <scope>ACTIVITY REGULATION (MICROBIAL INFECTION)</scope>
    <scope>INHIBITION BY US6 GLYCOPROTEIN</scope>
</reference>
<reference key="27">
    <citation type="journal article" date="1999" name="J. Immunol.">
        <title>Adenovirus E19 has two mechanisms for affecting class I MHC expression.</title>
        <authorList>
            <person name="Bennett E.M."/>
            <person name="Bennink J.R."/>
            <person name="Yewdell J.W."/>
            <person name="Brodsky F.M."/>
        </authorList>
    </citation>
    <scope>INTERACTION WITH ADENOVIRUS E3-19K GLYCOPROTEIN (MICROBIAL INFECTION)</scope>
</reference>
<reference key="28">
    <citation type="journal article" date="2000" name="J. Immunol.">
        <title>HLA-F is a predominantly empty, intracellular, TAP-associated MHC class Ib protein with a restricted expression pattern.</title>
        <authorList>
            <person name="Wainwright S.D."/>
            <person name="Biro P.A."/>
            <person name="Holmes C.H."/>
        </authorList>
    </citation>
    <scope>INTERACTION WITH HLA-F</scope>
</reference>
<reference key="29">
    <citation type="journal article" date="2001" name="Proc. Natl. Acad. Sci. U.S.A.">
        <title>Allosteric crosstalk between peptide-binding, transport, and ATP hydrolysis of the ABC transporter TAP.</title>
        <authorList>
            <person name="Gorbulev S."/>
            <person name="Abele R."/>
            <person name="Tampe R."/>
        </authorList>
    </citation>
    <scope>FUNCTION</scope>
    <scope>CATALYTIC ACTIVITY</scope>
    <scope>BIOPHYSICOCHEMICAL PROPERTIES</scope>
</reference>
<reference key="30">
    <citation type="journal article" date="2009" name="J. Immunol.">
        <title>Specific targeting of the EBV lytic phase protein BNLF2a to the transporter associated with antigen processing results in impairment of HLA class I-restricted antigen presentation.</title>
        <authorList>
            <person name="Horst D."/>
            <person name="van Leeuwen D."/>
            <person name="Croft N.P."/>
            <person name="Garstka M.A."/>
            <person name="Hislop A.D."/>
            <person name="Kremmer E."/>
            <person name="Rickinson A.B."/>
            <person name="Wiertz E.J.H.J."/>
            <person name="Ressing M.E."/>
        </authorList>
    </citation>
    <scope>INTERACTION WITH EBV BNLF2A (MICROBIAL INFECTION)</scope>
</reference>
<reference key="31">
    <citation type="journal article" date="2011" name="BMC Syst. Biol.">
        <title>Initial characterization of the human central proteome.</title>
        <authorList>
            <person name="Burkard T.R."/>
            <person name="Planyavsky M."/>
            <person name="Kaupe I."/>
            <person name="Breitwieser F.P."/>
            <person name="Buerckstuemmer T."/>
            <person name="Bennett K.L."/>
            <person name="Superti-Furga G."/>
            <person name="Colinge J."/>
        </authorList>
    </citation>
    <scope>IDENTIFICATION BY MASS SPECTROMETRY [LARGE SCALE ANALYSIS]</scope>
</reference>
<reference key="32">
    <citation type="journal article" date="2012" name="Cell. Mol. Life Sci.">
        <title>Direct evidence that the N-terminal extensions of the TAP complex act as autonomous interaction scaffolds for the assembly of the MHC I peptide-loading complex.</title>
        <authorList>
            <person name="Hulpke S."/>
            <person name="Tomioka M."/>
            <person name="Kremmer E."/>
            <person name="Ueda K."/>
            <person name="Abele R."/>
            <person name="Tampe R."/>
        </authorList>
    </citation>
    <scope>SUBCELLULAR LOCATION</scope>
    <scope>INTERACTION WITH TAPBP</scope>
</reference>
<reference key="33">
    <citation type="journal article" date="2014" name="Nat. Commun.">
        <title>Mechanistic determinants of the directionality and energetics of active export by a heterodimeric ABC transporter.</title>
        <authorList>
            <person name="Grossmann N."/>
            <person name="Vakkasoglu A.S."/>
            <person name="Hulpke S."/>
            <person name="Abele R."/>
            <person name="Gaudet R."/>
            <person name="Tampe R."/>
        </authorList>
    </citation>
    <scope>FUNCTION</scope>
    <scope>CATALYTIC ACTIVITY</scope>
    <scope>COFACTOR</scope>
    <scope>BIOPHYSICOCHEMICAL PROPERTIES</scope>
    <scope>ACTIVITY REGULATION</scope>
    <scope>MUTAGENESIS OF ASP-638</scope>
</reference>
<reference key="34">
    <citation type="journal article" date="2015" name="Nat. Commun.">
        <title>Ultrasensitive quantification of TAP-dependent antigen compartmentalization in scarce primary immune cell subsets.</title>
        <authorList>
            <person name="Fischbach H."/>
            <person name="Doering M."/>
            <person name="Nikles D."/>
            <person name="Lehnert E."/>
            <person name="Baldauf C."/>
            <person name="Kalinke U."/>
            <person name="Tampe R."/>
        </authorList>
    </citation>
    <scope>FUNCTION</scope>
    <scope>CATALYTIC ACTIVITY</scope>
    <scope>ACTIVITY REGULATION (MICROBIAL INFECTION)</scope>
</reference>
<reference key="35">
    <citation type="journal article" date="2015" name="Sci. Rep.">
        <title>Assembly of the MHC I peptide-loading complex determined by a conserved ionic lock-switch.</title>
        <authorList>
            <person name="Blees A."/>
            <person name="Reichel K."/>
            <person name="Trowitzsch S."/>
            <person name="Fisette O."/>
            <person name="Bock C."/>
            <person name="Abele R."/>
            <person name="Hummer G."/>
            <person name="Schaefer L.V."/>
            <person name="Tampe R."/>
        </authorList>
    </citation>
    <scope>FUNCTION</scope>
    <scope>SUBUNIT</scope>
    <scope>INTERACTION WITH TAPBP</scope>
    <scope>SITE</scope>
    <scope>MUTAGENESIS OF ASP-16</scope>
</reference>
<reference key="36">
    <citation type="journal article" date="1992" name="Proc. Natl. Acad. Sci. U.S.A.">
        <title>Allelic variants of the human putative peptide transporter involved in antigen processing.</title>
        <authorList>
            <person name="Colonna M."/>
            <person name="Bresnahan M."/>
            <person name="Bahram S."/>
            <person name="Strominger J.L."/>
            <person name="Spies T."/>
        </authorList>
    </citation>
    <scope>VARIANTS ILE-379 AND ALA-665</scope>
</reference>
<reference key="37">
    <citation type="journal article" date="1994" name="Science">
        <title>Homozygous human TAP peptide transporter mutation in HLA class I deficiency.</title>
        <authorList>
            <person name="de la Salle H."/>
            <person name="Hanau D."/>
            <person name="Fricker D."/>
            <person name="Urlacher A."/>
            <person name="Kelly A."/>
            <person name="Salamero J."/>
            <person name="Powis S.H."/>
            <person name="Donato L."/>
            <person name="Bausinger H."/>
            <person name="Laforet M."/>
            <person name="Jeras M."/>
            <person name="Spehner D."/>
            <person name="Bieber T."/>
            <person name="Falkenrodt A."/>
            <person name="Cazenave J.-P."/>
            <person name="Trowsdale J."/>
            <person name="Tongio M.-M."/>
        </authorList>
    </citation>
    <scope>INVOLVEMENT IN MHC1D2</scope>
</reference>
<reference key="38">
    <citation type="journal article" date="2001" name="Genes Immun.">
        <title>Genotyping TAP2 variants in North American Caucasians, Brazilians, and Africans.</title>
        <authorList>
            <person name="Tang J."/>
            <person name="Freedman D.O."/>
            <person name="Allen S."/>
            <person name="Karita E."/>
            <person name="Musonda R."/>
            <person name="Braga C."/>
            <person name="Jamieson B.D."/>
            <person name="Louie L."/>
            <person name="Kaslow R.A."/>
        </authorList>
    </citation>
    <scope>VARIANTS THR-374; ILE-379; ILE-467; SER-513; THR-565; CYS-651; ALA-665 AND GLN-GLU-GLY-GLN-ASP-LEU-TYR-SER-ARG-LEU-VAL-GLN-GLN-ARG-LEU-MET-ASP-686 INS</scope>
    <scope>POLYMORPHISM</scope>
</reference>
<comment type="function">
    <text evidence="8 11 18 19 20 21 31">ABC transporter associated with antigen processing. In complex with TAP1 mediates unidirectional translocation of peptide antigens from cytosol to endoplasmic reticulum (ER) for loading onto MHC class I (MHCI) molecules (PubMed:25377891, PubMed:25656091). Uses the chemical energy of ATP to export peptides against the concentration gradient (PubMed:25377891). During the transport cycle alternates between 'inward-facing' state with peptide binding site facing the cytosol to 'outward-facing' state with peptide binding site facing the ER lumen. Peptide antigen binding to ATP-loaded TAP1-TAP2 induces a switch to hydrolysis-competent 'outward-facing' conformation ready for peptide loading onto nascent MHCI molecules. Subsequently ATP hydrolysis resets the transporter to the 'inward facing' state for a new cycle (PubMed:11274390, PubMed:25377891, PubMed:25656091). Typically transports intracellular peptide antigens of 8 to 13 amino acids that arise from cytosolic proteolysis via IFNG-induced immunoproteasome. Binds peptides with free N- and C-termini, the first three and the C-terminal residues being critical. Preferentially selects peptides having a highly hydrophobic residue at position 3 and hydrophobic or charged residues at the C-terminal anchor. Proline at position 2 has the most destabilizing effect (PubMed:11274390, PubMed:7500034, PubMed:9256420). As a component of the peptide loading complex (PLC), acts as a molecular scaffold essential for peptide-MHCI assembly and antigen presentation (PubMed:1538751, PubMed:25377891, PubMed:26611325).</text>
</comment>
<comment type="catalytic activity">
    <reaction evidence="8 18 19">
        <text>a peptide antigen(in) + ATP + H2O = a peptide antigen(out) + ADP + phosphate + H(+)</text>
        <dbReference type="Rhea" id="RHEA:65972"/>
        <dbReference type="Rhea" id="RHEA-COMP:16941"/>
        <dbReference type="ChEBI" id="CHEBI:15377"/>
        <dbReference type="ChEBI" id="CHEBI:15378"/>
        <dbReference type="ChEBI" id="CHEBI:30616"/>
        <dbReference type="ChEBI" id="CHEBI:43474"/>
        <dbReference type="ChEBI" id="CHEBI:166823"/>
        <dbReference type="ChEBI" id="CHEBI:456216"/>
        <dbReference type="EC" id="7.4.2.14"/>
    </reaction>
    <physiologicalReaction direction="left-to-right" evidence="41 42 43">
        <dbReference type="Rhea" id="RHEA:65973"/>
    </physiologicalReaction>
</comment>
<comment type="cofactor">
    <cofactor evidence="18">
        <name>Mg(2+)</name>
        <dbReference type="ChEBI" id="CHEBI:18420"/>
    </cofactor>
</comment>
<comment type="activity regulation">
    <text evidence="18">Inhibited at high ER lumenal peptide concentrations.</text>
</comment>
<comment type="activity regulation">
    <text evidence="19 27">(Microbial infection) Inhibited by herpes simplex virus US12/ICP47 protein, which blocks the peptide-binding site of TAP1-TAP2.</text>
</comment>
<comment type="activity regulation">
    <text evidence="7 19 30">(Microbial infection) Inhibited by human cytomegalovirus US6 glycoprotein, which binds to the lumenal side of TAP1-TAP2 complex and inhibits peptide translocation by specifically blocking ATP-binding and preventing TAP1-TAP2 conformational rearrangement induced by peptide binding.</text>
</comment>
<comment type="biophysicochemical properties">
    <kinetics>
        <KM evidence="8">0.3 mM for ATP</KM>
        <KM evidence="18">0.099 mM for ATP</KM>
        <Vmax evidence="8">2.0 umol/min/mg enzyme toward ATP</Vmax>
    </kinetics>
</comment>
<comment type="subunit">
    <text evidence="6 11 17 20 26 28 33">Heterodimer of TAP1 and TAP2 (TAP1-TAP2) (PubMed:1538751). A component of the peptide loading complex (PLC), interacts via TAPBP with MHCI heterodimer; this interaction mediates peptide-MHCI assembly (PubMed:26611325). Recruits TAPBP in a 1:1 stoichiometry (PubMed:22638925). Interacts with classical MHCI such as HLA-A*02-B2M; this interaction is obligatory for the loading of peptide epitopes (PubMed:8630735, PubMed:8805302). Interacts with non-classical MHCI molecules including HLA-E-B2M and HLA-F-B2M as well as PLC component CALR before the peptide loading (PubMed:10605026, PubMed:9427624).</text>
</comment>
<comment type="subunit">
    <text evidence="15">(Microbial infection) Interacts with Epstein-Barr virus BLNF2a.</text>
</comment>
<comment type="subunit">
    <text evidence="23">(Microbial infection) Interacts with herpes simplex virus US12/ICP47.</text>
</comment>
<comment type="subunit">
    <text evidence="5">(Microbial infection) Interacts with adenovirus E3-19K glycoprotein, which binds TAP1-TAP2 and acts as a TAPBP inhibitor, preventing TAP1-TAP2 association with MHCI.</text>
</comment>
<comment type="interaction">
    <interactant intactId="EBI-780781">
        <id>Q03519</id>
    </interactant>
    <interactant intactId="EBI-747259">
        <id>Q03518</id>
        <label>TAP1</label>
    </interactant>
    <organismsDiffer>false</organismsDiffer>
    <experiments>15</experiments>
</comment>
<comment type="interaction">
    <interactant intactId="EBI-780781">
        <id>Q03519</id>
    </interactant>
    <interactant intactId="EBI-31441209">
        <id>Q03518-2</id>
        <label>TAP1</label>
    </interactant>
    <organismsDiffer>false</organismsDiffer>
    <experiments>4</experiments>
</comment>
<comment type="interaction">
    <interactant intactId="EBI-780781">
        <id>Q03519</id>
    </interactant>
    <interactant intactId="EBI-874801">
        <id>O15533</id>
        <label>TAPBP</label>
    </interactant>
    <organismsDiffer>false</organismsDiffer>
    <experiments>8</experiments>
</comment>
<comment type="interaction">
    <interactant intactId="EBI-780781">
        <id>Q03519</id>
    </interactant>
    <interactant intactId="EBI-9346744">
        <id>P0C739</id>
        <label>BNLF2a</label>
    </interactant>
    <organismsDiffer>true</organismsDiffer>
    <experiments>6</experiments>
</comment>
<comment type="interaction">
    <interactant intactId="EBI-780781">
        <id>Q03519</id>
    </interactant>
    <interactant intactId="EBI-11303846">
        <id>Q77CE4</id>
        <label>gN</label>
    </interactant>
    <organismsDiffer>true</organismsDiffer>
    <experiments>2</experiments>
</comment>
<comment type="subcellular location">
    <subcellularLocation>
        <location evidence="13 17">Endoplasmic reticulum membrane</location>
        <topology evidence="2">Multi-pass membrane protein</topology>
    </subcellularLocation>
    <text>The transmembrane segments seem to form a pore in the membrane.</text>
</comment>
<comment type="alternative products">
    <event type="alternative splicing"/>
    <isoform>
        <id>Q03519-1</id>
        <name>1</name>
        <sequence type="displayed"/>
    </isoform>
    <isoform>
        <id>Q03519-2</id>
        <name>2</name>
        <sequence type="described" ref="VSP_038904"/>
    </isoform>
</comment>
<comment type="domain">
    <text evidence="29">The peptide-binding site is shared between the cytoplasmic loops of TAP1 and TAP2.</text>
</comment>
<comment type="domain">
    <text evidence="1">The nucleotide-binding domain (NBD) mediates ATP hydrolysis coupled to peptide translocation. Two ATP molecules are accommodated at distinct nucleotide binding sites (NBS) at TAP1-TAP2 dimer interface. Each NBS is formed by Walker A (GxxGxGKST) and Q-loop motifs from NBD of one subunit, while the NBD from the second subunit completes the active site by contributing the C loop motif (LSGGQ). Each ATP molecule is coordinated via the beta- and gamma-phosphates to a Mg2+ ion, which is necessary for ATP hydrolysis.</text>
</comment>
<comment type="polymorphism">
    <text evidence="9 10 14 16 24 25">4 common alleles are officially recognized: TAP2*01:01 (TAP2A or PSF2A or RING11A), TAP2*01:02 (TAP2E), TAP2*01:03 (TAP2F), and TAP2*02:01 (TAP2B or PSF2B or RING11B). Other relatively common alleles have been identified: TAP2*01D, TAP2*01E, TAP2*01F, TAP2*01G, TAP2*01H, TAP2*02B, TAP2*02C (TAP2*02:02), TAP2*02D, TAP2*02E, TAP2*02F, TAP2*03A and TAP2*04A. The sequence shown is that of TAP2*01:01.</text>
</comment>
<comment type="polymorphism">
    <text evidence="32">The allele TAP2*Bky2 is commonly found only in the Japanese population. It may be associated with susceptibility to Sjoegren syndrome, an autoimmune disorder characterized by abnormal dryness of the conjunctiva, cornea and mouth due to exocrine glands dysfunction.</text>
</comment>
<comment type="disease" evidence="22">
    <disease id="DI-06899">
        <name>MHC class I deficiency 2</name>
        <acronym>MHC1D2</acronym>
        <description>An autosomal recessive, progressive disorder characterized by chronic bacterial infections of the upper and lower respiratory tract apparent in the first or second decades of life, nasal polyps, and ulcers with granulomatous inflammation affecting the nasal cavity, upper respiratory tract, or skin. Patients may develop bronchiectasis and respiratory failure.</description>
        <dbReference type="MIM" id="620813"/>
    </disease>
    <text>The disease is caused by variants affecting the gene represented in this entry.</text>
</comment>
<comment type="similarity">
    <text evidence="40">Belongs to the ABC transporter superfamily. ABCB family. MHC peptide exporter (TC 3.A.1.209) subfamily.</text>
</comment>
<comment type="online information" name="TAP2base">
    <link uri="https://databases.lovd.nl/shared/genes/TAP2"/>
    <text>TAP2 mutation db</text>
</comment>
<comment type="online information" name="ABCMdb">
    <link uri="http://abcm2.hegelab.org/search"/>
    <text>Database for mutations in ABC proteins</text>
</comment>
<feature type="chain" id="PRO_0000093329" description="Antigen peptide transporter 2">
    <location>
        <begin position="1"/>
        <end position="686"/>
    </location>
</feature>
<feature type="topological domain" description="Lumenal" evidence="2">
    <location>
        <begin position="1"/>
        <end position="6"/>
    </location>
</feature>
<feature type="transmembrane region" description="Helical; Name=1" evidence="4">
    <location>
        <begin position="7"/>
        <end position="27"/>
    </location>
</feature>
<feature type="topological domain" description="Cytoplasmic" evidence="2">
    <location>
        <begin position="28"/>
        <end position="56"/>
    </location>
</feature>
<feature type="transmembrane region" description="Helical; Name=2" evidence="4">
    <location>
        <begin position="57"/>
        <end position="77"/>
    </location>
</feature>
<feature type="topological domain" description="Lumenal" evidence="2">
    <location>
        <begin position="78"/>
        <end position="98"/>
    </location>
</feature>
<feature type="transmembrane region" description="Helical; Name=3" evidence="4">
    <location>
        <begin position="99"/>
        <end position="119"/>
    </location>
</feature>
<feature type="topological domain" description="Cytoplasmic" evidence="2">
    <location>
        <begin position="120"/>
        <end position="148"/>
    </location>
</feature>
<feature type="transmembrane region" description="Helical; Name=4" evidence="4">
    <location>
        <begin position="149"/>
        <end position="169"/>
    </location>
</feature>
<feature type="topological domain" description="Lumenal" evidence="2">
    <location>
        <begin position="170"/>
        <end position="187"/>
    </location>
</feature>
<feature type="transmembrane region" description="Helical; Name=5" evidence="4">
    <location>
        <begin position="188"/>
        <end position="208"/>
    </location>
</feature>
<feature type="topological domain" description="Cytoplasmic" evidence="2">
    <location>
        <begin position="209"/>
        <end position="266"/>
    </location>
</feature>
<feature type="transmembrane region" description="Helical; Name=6" evidence="4">
    <location>
        <begin position="267"/>
        <end position="287"/>
    </location>
</feature>
<feature type="topological domain" description="Lumenal" evidence="2">
    <location>
        <begin position="288"/>
        <end position="293"/>
    </location>
</feature>
<feature type="transmembrane region" description="Helical; Name=7" evidence="4">
    <location>
        <begin position="294"/>
        <end position="314"/>
    </location>
</feature>
<feature type="topological domain" description="Cytoplasmic" evidence="2">
    <location>
        <begin position="315"/>
        <end position="374"/>
    </location>
</feature>
<feature type="transmembrane region" description="Helical; Name=8" evidence="4">
    <location>
        <begin position="375"/>
        <end position="395"/>
    </location>
</feature>
<feature type="topological domain" description="Lumenal" evidence="2">
    <location>
        <begin position="396"/>
        <end position="408"/>
    </location>
</feature>
<feature type="transmembrane region" description="Helical; Name=9" evidence="4">
    <location>
        <begin position="409"/>
        <end position="429"/>
    </location>
</feature>
<feature type="topological domain" description="Cytoplasmic" evidence="2">
    <location>
        <begin position="430"/>
        <end position="686"/>
    </location>
</feature>
<feature type="domain" description="ABC transmembrane type-1" evidence="4">
    <location>
        <begin position="152"/>
        <end position="435"/>
    </location>
</feature>
<feature type="domain" description="ABC transporter" evidence="3">
    <location>
        <begin position="468"/>
        <end position="686"/>
    </location>
</feature>
<feature type="region of interest" description="Part of the peptide-binding site" evidence="29">
    <location>
        <begin position="301"/>
        <end position="389"/>
    </location>
</feature>
<feature type="region of interest" description="Part of the peptide-binding site" evidence="29">
    <location>
        <begin position="414"/>
        <end position="433"/>
    </location>
</feature>
<feature type="binding site" evidence="3">
    <location>
        <begin position="503"/>
        <end position="510"/>
    </location>
    <ligand>
        <name>ATP</name>
        <dbReference type="ChEBI" id="CHEBI:30616"/>
    </ligand>
</feature>
<feature type="site" description="Inter-subunit salt bridge with TAPBP" evidence="20">
    <location>
        <position position="16"/>
    </location>
</feature>
<feature type="splice variant" id="VSP_038904" description="In isoform 2." evidence="39">
    <original>LQDWNSRGDRTVLVIAHRLQTVQRAHQILVLQEGKLQKLAQL</original>
    <variation>KTLWKFMIF</variation>
    <location>
        <begin position="645"/>
        <end position="686"/>
    </location>
</feature>
<feature type="sequence variant" id="VAR_036873" description="In dbSNP:rs17220192.">
    <original>R</original>
    <variation>K</variation>
    <location>
        <position position="56"/>
    </location>
</feature>
<feature type="sequence variant" id="VAR_014997" description="In allele TAP2*01F, allele TAP2*01G, allele TAP2*01H, allele TAP2*02B and allele TAP2*02D; dbSNP:rs111303994." evidence="9 34">
    <original>A</original>
    <variation>T</variation>
    <location>
        <position position="374"/>
    </location>
</feature>
<feature type="sequence variant" id="VAR_000094" description="In allele TAP2*01D, allele TAP2*01E, allele TAP2*01G, allele TAP2*02C and allele TAP2*02F; dbSNP:rs1800454." evidence="9 12 35">
    <original>V</original>
    <variation>I</variation>
    <location>
        <position position="379"/>
    </location>
</feature>
<feature type="sequence variant" id="VAR_014998" description="In allele TAP2*01F and allele TAP2*02D; dbSNP:rs150253319." evidence="9 34">
    <original>V</original>
    <variation>I</variation>
    <location>
        <position position="467"/>
    </location>
</feature>
<feature type="sequence variant" id="VAR_014999">
    <original>A</original>
    <variation>S</variation>
    <location>
        <position position="513"/>
    </location>
</feature>
<feature type="sequence variant" id="VAR_000095" description="In allele TAP2*01:02, allele TAP2*01D, allele TAP2*02E and allele TAP2*02F; dbSNP:rs2228396." evidence="9">
    <original>A</original>
    <variation>T</variation>
    <location>
        <position position="565"/>
    </location>
</feature>
<feature type="sequence variant" id="VAR_015000" description="In allele TAP2*BKY2; dbSNP:rs2228391." evidence="32">
    <original>M</original>
    <variation>V</variation>
    <location>
        <position position="577"/>
    </location>
</feature>
<feature type="sequence variant" id="VAR_000096" description="In allele TAP2*01:03 and allele TAP2*01G; dbSNP:rs4148876." evidence="9">
    <original>R</original>
    <variation>C</variation>
    <location>
        <position position="651"/>
    </location>
</feature>
<feature type="sequence variant" id="VAR_000097" description="In allele TAP2*02:01, allele TAP2*02B, allele TAP2*02C, allele TAP2*02D, allele TAP2*02E, allele TAP2*02F, allele TAP2*04A and allele TAP2*Bky2; dbSNP:rs241447." evidence="9 12">
    <original>T</original>
    <variation>A</variation>
    <location>
        <position position="665"/>
    </location>
</feature>
<feature type="sequence variant" id="VAR_000098" description="In allele TAP2*02:01, allele TAP2*02B, allele TAP2*02C, allele TAP2*02D, allele TAP2*02E, allele TAP2*02F, allele TAP2*03A and allele TAP2*BKY2.">
    <original>L</original>
    <variation>LQEGQDLYSRLVQQRLMD</variation>
    <location>
        <position position="686"/>
    </location>
</feature>
<feature type="mutagenesis site" description="Complete loss of interaction with TAPBP, resulting in impaired PLC assembly and antigen presentation." evidence="20">
    <original>D</original>
    <variation>K</variation>
    <location>
        <position position="16"/>
    </location>
</feature>
<feature type="mutagenesis site" description="Inactive in peptide transport when associated with 'A-734' of TAP1." evidence="18">
    <original>D</original>
    <variation>A</variation>
    <location>
        <position position="638"/>
    </location>
</feature>
<feature type="sequence conflict" description="In Ref. 8; BAD97020." evidence="40" ref="8">
    <original>F</original>
    <variation>I</variation>
    <location>
        <position position="345"/>
    </location>
</feature>
<feature type="sequence conflict" description="In Ref. 8; BAD97020." evidence="40" ref="8">
    <original>Y</original>
    <variation>N</variation>
    <location>
        <position position="520"/>
    </location>
</feature>
<feature type="sequence conflict" description="In Ref. 8; BAD97020." evidence="40" ref="8">
    <original>T</original>
    <variation>A</variation>
    <location>
        <position position="655"/>
    </location>
</feature>
<feature type="helix" evidence="45">
    <location>
        <begin position="132"/>
        <end position="145"/>
    </location>
</feature>
<feature type="helix" evidence="45">
    <location>
        <begin position="146"/>
        <end position="148"/>
    </location>
</feature>
<feature type="helix" evidence="45">
    <location>
        <begin position="149"/>
        <end position="181"/>
    </location>
</feature>
<feature type="helix" evidence="45">
    <location>
        <begin position="186"/>
        <end position="233"/>
    </location>
</feature>
<feature type="helix" evidence="45">
    <location>
        <begin position="238"/>
        <end position="243"/>
    </location>
</feature>
<feature type="helix" evidence="45">
    <location>
        <begin position="246"/>
        <end position="254"/>
    </location>
</feature>
<feature type="helix" evidence="45">
    <location>
        <begin position="256"/>
        <end position="259"/>
    </location>
</feature>
<feature type="helix" evidence="45">
    <location>
        <begin position="260"/>
        <end position="262"/>
    </location>
</feature>
<feature type="turn" evidence="45">
    <location>
        <begin position="263"/>
        <end position="266"/>
    </location>
</feature>
<feature type="helix" evidence="45">
    <location>
        <begin position="267"/>
        <end position="288"/>
    </location>
</feature>
<feature type="helix" evidence="45">
    <location>
        <begin position="290"/>
        <end position="337"/>
    </location>
</feature>
<feature type="helix" evidence="45">
    <location>
        <begin position="339"/>
        <end position="345"/>
    </location>
</feature>
<feature type="helix" evidence="45">
    <location>
        <begin position="348"/>
        <end position="399"/>
    </location>
</feature>
<feature type="turn" evidence="45">
    <location>
        <begin position="400"/>
        <end position="402"/>
    </location>
</feature>
<feature type="helix" evidence="45">
    <location>
        <begin position="406"/>
        <end position="447"/>
    </location>
</feature>
<feature type="strand" evidence="45">
    <location>
        <begin position="468"/>
        <end position="474"/>
    </location>
</feature>
<feature type="strand" evidence="46">
    <location>
        <begin position="478"/>
        <end position="480"/>
    </location>
</feature>
<feature type="strand" evidence="45">
    <location>
        <begin position="488"/>
        <end position="493"/>
    </location>
</feature>
<feature type="strand" evidence="45">
    <location>
        <begin position="495"/>
        <end position="503"/>
    </location>
</feature>
<feature type="helix" evidence="46">
    <location>
        <begin position="505"/>
        <end position="507"/>
    </location>
</feature>
<feature type="helix" evidence="45">
    <location>
        <begin position="510"/>
        <end position="515"/>
    </location>
</feature>
<feature type="turn" evidence="45">
    <location>
        <begin position="516"/>
        <end position="518"/>
    </location>
</feature>
<feature type="strand" evidence="45">
    <location>
        <begin position="523"/>
        <end position="529"/>
    </location>
</feature>
<feature type="helix" evidence="45">
    <location>
        <begin position="534"/>
        <end position="536"/>
    </location>
</feature>
<feature type="helix" evidence="45">
    <location>
        <begin position="539"/>
        <end position="545"/>
    </location>
</feature>
<feature type="strand" evidence="45">
    <location>
        <begin position="546"/>
        <end position="549"/>
    </location>
</feature>
<feature type="strand" evidence="45">
    <location>
        <begin position="557"/>
        <end position="559"/>
    </location>
</feature>
<feature type="helix" evidence="45">
    <location>
        <begin position="560"/>
        <end position="564"/>
    </location>
</feature>
<feature type="turn" evidence="45">
    <location>
        <begin position="565"/>
        <end position="567"/>
    </location>
</feature>
<feature type="helix" evidence="45">
    <location>
        <begin position="573"/>
        <end position="582"/>
    </location>
</feature>
<feature type="turn" evidence="47">
    <location>
        <begin position="583"/>
        <end position="585"/>
    </location>
</feature>
<feature type="helix" evidence="45">
    <location>
        <begin position="586"/>
        <end position="591"/>
    </location>
</feature>
<feature type="helix" evidence="45">
    <location>
        <begin position="595"/>
        <end position="597"/>
    </location>
</feature>
<feature type="helix" evidence="47">
    <location>
        <begin position="602"/>
        <end position="604"/>
    </location>
</feature>
<feature type="helix" evidence="45">
    <location>
        <begin position="609"/>
        <end position="621"/>
    </location>
</feature>
<feature type="strand" evidence="45">
    <location>
        <begin position="626"/>
        <end position="632"/>
    </location>
</feature>
<feature type="turn" evidence="45">
    <location>
        <begin position="633"/>
        <end position="636"/>
    </location>
</feature>
<feature type="helix" evidence="45">
    <location>
        <begin position="639"/>
        <end position="645"/>
    </location>
</feature>
<feature type="helix" evidence="45">
    <location>
        <begin position="649"/>
        <end position="651"/>
    </location>
</feature>
<feature type="strand" evidence="45">
    <location>
        <begin position="653"/>
        <end position="659"/>
    </location>
</feature>
<feature type="strand" evidence="45">
    <location>
        <begin position="661"/>
        <end position="663"/>
    </location>
</feature>
<feature type="helix" evidence="45">
    <location>
        <begin position="664"/>
        <end position="667"/>
    </location>
</feature>
<feature type="strand" evidence="45">
    <location>
        <begin position="670"/>
        <end position="676"/>
    </location>
</feature>
<gene>
    <name evidence="36 44" type="primary">TAP2</name>
    <name type="synonym">ABCB3</name>
    <name type="synonym">PSF2</name>
    <name type="synonym">RING11</name>
    <name type="synonym">Y1</name>
</gene>
<protein>
    <recommendedName>
        <fullName>Antigen peptide transporter 2</fullName>
        <shortName>APT2</shortName>
        <ecNumber evidence="8 18 19">7.4.2.14</ecNumber>
    </recommendedName>
    <alternativeName>
        <fullName>ATP-binding cassette sub-family B member 3</fullName>
    </alternativeName>
    <alternativeName>
        <fullName evidence="38">Peptide supply factor 2</fullName>
    </alternativeName>
    <alternativeName>
        <fullName>Peptide transporter PSF2</fullName>
        <shortName evidence="38">PSF-2</shortName>
    </alternativeName>
    <alternativeName>
        <fullName>Peptide transporter TAP2</fullName>
    </alternativeName>
    <alternativeName>
        <fullName>Peptide transporter involved in antigen processing 2</fullName>
    </alternativeName>
    <alternativeName>
        <fullName>Really interesting new gene 11 protein</fullName>
        <shortName evidence="37">RING11</shortName>
    </alternativeName>
</protein>
<name>TAP2_HUMAN</name>
<organism>
    <name type="scientific">Homo sapiens</name>
    <name type="common">Human</name>
    <dbReference type="NCBI Taxonomy" id="9606"/>
    <lineage>
        <taxon>Eukaryota</taxon>
        <taxon>Metazoa</taxon>
        <taxon>Chordata</taxon>
        <taxon>Craniata</taxon>
        <taxon>Vertebrata</taxon>
        <taxon>Euteleostomi</taxon>
        <taxon>Mammalia</taxon>
        <taxon>Eutheria</taxon>
        <taxon>Euarchontoglires</taxon>
        <taxon>Primates</taxon>
        <taxon>Haplorrhini</taxon>
        <taxon>Catarrhini</taxon>
        <taxon>Hominidae</taxon>
        <taxon>Homo</taxon>
    </lineage>
</organism>
<accession>Q03519</accession>
<accession>B0V2J8</accession>
<accession>O95410</accession>
<accession>Q53FI6</accession>
<accession>Q5HY71</accession>
<accession>Q96PT8</accession>
<accession>Q9UQ83</accession>
<proteinExistence type="evidence at protein level"/>
<evidence type="ECO:0000250" key="1">
    <source>
        <dbReference type="UniProtKB" id="P36370"/>
    </source>
</evidence>
<evidence type="ECO:0000255" key="2"/>
<evidence type="ECO:0000255" key="3">
    <source>
        <dbReference type="PROSITE-ProRule" id="PRU00434"/>
    </source>
</evidence>
<evidence type="ECO:0000255" key="4">
    <source>
        <dbReference type="PROSITE-ProRule" id="PRU00441"/>
    </source>
</evidence>
<evidence type="ECO:0000269" key="5">
    <source>
    </source>
</evidence>
<evidence type="ECO:0000269" key="6">
    <source>
    </source>
</evidence>
<evidence type="ECO:0000269" key="7">
    <source>
    </source>
</evidence>
<evidence type="ECO:0000269" key="8">
    <source>
    </source>
</evidence>
<evidence type="ECO:0000269" key="9">
    <source>
    </source>
</evidence>
<evidence type="ECO:0000269" key="10">
    <source>
    </source>
</evidence>
<evidence type="ECO:0000269" key="11">
    <source>
    </source>
</evidence>
<evidence type="ECO:0000269" key="12">
    <source>
    </source>
</evidence>
<evidence type="ECO:0000269" key="13">
    <source>
    </source>
</evidence>
<evidence type="ECO:0000269" key="14">
    <source>
    </source>
</evidence>
<evidence type="ECO:0000269" key="15">
    <source>
    </source>
</evidence>
<evidence type="ECO:0000269" key="16">
    <source>
    </source>
</evidence>
<evidence type="ECO:0000269" key="17">
    <source>
    </source>
</evidence>
<evidence type="ECO:0000269" key="18">
    <source>
    </source>
</evidence>
<evidence type="ECO:0000269" key="19">
    <source>
    </source>
</evidence>
<evidence type="ECO:0000269" key="20">
    <source>
    </source>
</evidence>
<evidence type="ECO:0000269" key="21">
    <source>
    </source>
</evidence>
<evidence type="ECO:0000269" key="22">
    <source>
    </source>
</evidence>
<evidence type="ECO:0000269" key="23">
    <source>
    </source>
</evidence>
<evidence type="ECO:0000269" key="24">
    <source>
    </source>
</evidence>
<evidence type="ECO:0000269" key="25">
    <source>
    </source>
</evidence>
<evidence type="ECO:0000269" key="26">
    <source>
    </source>
</evidence>
<evidence type="ECO:0000269" key="27">
    <source>
    </source>
</evidence>
<evidence type="ECO:0000269" key="28">
    <source>
    </source>
</evidence>
<evidence type="ECO:0000269" key="29">
    <source>
    </source>
</evidence>
<evidence type="ECO:0000269" key="30">
    <source>
    </source>
</evidence>
<evidence type="ECO:0000269" key="31">
    <source>
    </source>
</evidence>
<evidence type="ECO:0000269" key="32">
    <source>
    </source>
</evidence>
<evidence type="ECO:0000269" key="33">
    <source>
    </source>
</evidence>
<evidence type="ECO:0000269" key="34">
    <source>
    </source>
</evidence>
<evidence type="ECO:0000269" key="35">
    <source>
    </source>
</evidence>
<evidence type="ECO:0000303" key="36">
    <source>
    </source>
</evidence>
<evidence type="ECO:0000303" key="37">
    <source>
    </source>
</evidence>
<evidence type="ECO:0000303" key="38">
    <source>
    </source>
</evidence>
<evidence type="ECO:0000303" key="39">
    <source>
    </source>
</evidence>
<evidence type="ECO:0000305" key="40"/>
<evidence type="ECO:0000305" key="41">
    <source>
    </source>
</evidence>
<evidence type="ECO:0000305" key="42">
    <source>
    </source>
</evidence>
<evidence type="ECO:0000305" key="43">
    <source>
    </source>
</evidence>
<evidence type="ECO:0000312" key="44">
    <source>
        <dbReference type="HGNC" id="HGNC:44"/>
    </source>
</evidence>
<evidence type="ECO:0007829" key="45">
    <source>
        <dbReference type="PDB" id="8T4E"/>
    </source>
</evidence>
<evidence type="ECO:0007829" key="46">
    <source>
        <dbReference type="PDB" id="8T4F"/>
    </source>
</evidence>
<evidence type="ECO:0007829" key="47">
    <source>
        <dbReference type="PDB" id="8T4G"/>
    </source>
</evidence>
<keyword id="KW-0002">3D-structure</keyword>
<keyword id="KW-1064">Adaptive immunity</keyword>
<keyword id="KW-0025">Alternative splicing</keyword>
<keyword id="KW-0067">ATP-binding</keyword>
<keyword id="KW-0256">Endoplasmic reticulum</keyword>
<keyword id="KW-0945">Host-virus interaction</keyword>
<keyword id="KW-0391">Immunity</keyword>
<keyword id="KW-0460">Magnesium</keyword>
<keyword id="KW-0472">Membrane</keyword>
<keyword id="KW-0479">Metal-binding</keyword>
<keyword id="KW-0547">Nucleotide-binding</keyword>
<keyword id="KW-0571">Peptide transport</keyword>
<keyword id="KW-0653">Protein transport</keyword>
<keyword id="KW-1267">Proteomics identification</keyword>
<keyword id="KW-1185">Reference proteome</keyword>
<keyword id="KW-1278">Translocase</keyword>
<keyword id="KW-0812">Transmembrane</keyword>
<keyword id="KW-1133">Transmembrane helix</keyword>
<keyword id="KW-0813">Transport</keyword>
<sequence length="686" mass="75664">MRLPDLRPWTSLLLVDAALLWLLQGPLGTLLPQGLPGLWLEGTLRLGGLWGLLKLRGLLGFVGTLLLPLCLATPLTVSLRALVAGASRAPPARVASAPWSWLLVGYGAAGLSWSLWAVLSPPGAQEKEQDQVNNKVLMWRLLKLSRPDLPLLVAAFFFLVLAVLGETLIPHYSGRVIDILGGDFDPHAFASAIFFMCLFSFGSSLSAGCRGGCFTYTMSRINLRIREQLFSSLLRQDLGFFQETKTGELNSRLSSDTTLMSNWLPLNANVLLRSLVKVVGLYGFMLSISPRLTLLSLLHMPFTIAAEKVYNTRHQEVLREIQDAVARAGQVVREAVGGLQTVRSFGAEEHEVCRYKEALEQCRQLYWRRDLERALYLLVRRVLHLGVQMLMLSCGLQQMQDGELTQGSLLSFMIYQESVGSYVQTLVYIYGDMLSNVGAAEKVFSYMDRQPNLPSPGTLAPTTLQGVVKFQDVSFAYPNRPDRPVLKGLTFTLRPGEVTALVGPNGSGKSTVAALLQNLYQPTGGQVLLDEKPISQYEHCYLHSQVVSVGQEPVLFSGSVRNNIAYGLQSCEDDKVMAAAQAAHADDFIQEMEHGIYTDVGEKGSQLAAGQKQRLAIARALVRDPRVLILDEATSALDVQCEQALQDWNSRGDRTVLVIAHRLQTVQRAHQILVLQEGKLQKLAQL</sequence>
<dbReference type="EC" id="7.4.2.14" evidence="8 18 19"/>
<dbReference type="EMBL" id="X66401">
    <property type="protein sequence ID" value="CAA47027.1"/>
    <property type="molecule type" value="Genomic_DNA"/>
</dbReference>
<dbReference type="EMBL" id="M84748">
    <property type="status" value="NOT_ANNOTATED_CDS"/>
    <property type="molecule type" value="mRNA"/>
</dbReference>
<dbReference type="EMBL" id="M74447">
    <property type="protein sequence ID" value="AAA59841.1"/>
    <property type="molecule type" value="mRNA"/>
</dbReference>
<dbReference type="EMBL" id="Z22935">
    <property type="protein sequence ID" value="CAA80522.1"/>
    <property type="molecule type" value="mRNA"/>
</dbReference>
<dbReference type="EMBL" id="Z22936">
    <property type="protein sequence ID" value="CAA80523.1"/>
    <property type="molecule type" value="mRNA"/>
</dbReference>
<dbReference type="EMBL" id="AB073779">
    <property type="protein sequence ID" value="BAB71769.1"/>
    <property type="molecule type" value="mRNA"/>
</dbReference>
<dbReference type="EMBL" id="AF105151">
    <property type="protein sequence ID" value="AAD12059.1"/>
    <property type="molecule type" value="mRNA"/>
</dbReference>
<dbReference type="EMBL" id="X87344">
    <property type="protein sequence ID" value="CAA60788.1"/>
    <property type="molecule type" value="Genomic_DNA"/>
</dbReference>
<dbReference type="EMBL" id="AK222823">
    <property type="protein sequence ID" value="BAD96543.1"/>
    <property type="molecule type" value="mRNA"/>
</dbReference>
<dbReference type="EMBL" id="AK223300">
    <property type="protein sequence ID" value="BAD97020.1"/>
    <property type="molecule type" value="mRNA"/>
</dbReference>
<dbReference type="EMBL" id="BX296564">
    <property type="status" value="NOT_ANNOTATED_CDS"/>
    <property type="molecule type" value="Genomic_DNA"/>
</dbReference>
<dbReference type="EMBL" id="CR788227">
    <property type="status" value="NOT_ANNOTATED_CDS"/>
    <property type="molecule type" value="Genomic_DNA"/>
</dbReference>
<dbReference type="EMBL" id="BX682530">
    <property type="status" value="NOT_ANNOTATED_CDS"/>
    <property type="molecule type" value="Genomic_DNA"/>
</dbReference>
<dbReference type="EMBL" id="CR762476">
    <property type="status" value="NOT_ANNOTATED_CDS"/>
    <property type="molecule type" value="Genomic_DNA"/>
</dbReference>
<dbReference type="EMBL" id="CR753889">
    <property type="status" value="NOT_ANNOTATED_CDS"/>
    <property type="molecule type" value="Genomic_DNA"/>
</dbReference>
<dbReference type="EMBL" id="CT009502">
    <property type="status" value="NOT_ANNOTATED_CDS"/>
    <property type="molecule type" value="Genomic_DNA"/>
</dbReference>
<dbReference type="EMBL" id="BC002751">
    <property type="status" value="NOT_ANNOTATED_CDS"/>
    <property type="molecule type" value="mRNA"/>
</dbReference>
<dbReference type="EMBL" id="U07844">
    <property type="protein sequence ID" value="AAA79901.1"/>
    <property type="molecule type" value="mRNA"/>
</dbReference>
<dbReference type="EMBL" id="AH007554">
    <property type="protein sequence ID" value="AAD23381.1"/>
    <property type="molecule type" value="Genomic_DNA"/>
</dbReference>
<dbReference type="EMBL" id="L09191">
    <property type="protein sequence ID" value="AAA58648.1"/>
    <property type="molecule type" value="mRNA"/>
</dbReference>
<dbReference type="EMBL" id="L10287">
    <property type="protein sequence ID" value="AAA58649.1"/>
    <property type="molecule type" value="mRNA"/>
</dbReference>
<dbReference type="CCDS" id="CCDS4755.1">
    <molecule id="Q03519-2"/>
</dbReference>
<dbReference type="CCDS" id="CCDS78129.1">
    <molecule id="Q03519-1"/>
</dbReference>
<dbReference type="PIR" id="B41538">
    <property type="entry name" value="B41538"/>
</dbReference>
<dbReference type="RefSeq" id="NP_000535.3">
    <property type="nucleotide sequence ID" value="NM_000544.3"/>
</dbReference>
<dbReference type="RefSeq" id="NP_001276972.1">
    <molecule id="Q03519-1"/>
    <property type="nucleotide sequence ID" value="NM_001290043.2"/>
</dbReference>
<dbReference type="RefSeq" id="NP_061313.2">
    <molecule id="Q03519-2"/>
    <property type="nucleotide sequence ID" value="NM_018833.3"/>
</dbReference>
<dbReference type="PDB" id="5U1D">
    <property type="method" value="EM"/>
    <property type="resolution" value="3.97 A"/>
    <property type="chains" value="B=1-686"/>
</dbReference>
<dbReference type="PDB" id="8T46">
    <property type="method" value="EM"/>
    <property type="resolution" value="3.60 A"/>
    <property type="chains" value="B=1-686"/>
</dbReference>
<dbReference type="PDB" id="8T4E">
    <property type="method" value="EM"/>
    <property type="resolution" value="3.50 A"/>
    <property type="chains" value="B=1-686"/>
</dbReference>
<dbReference type="PDB" id="8T4F">
    <property type="method" value="EM"/>
    <property type="resolution" value="3.50 A"/>
    <property type="chains" value="B=1-686"/>
</dbReference>
<dbReference type="PDB" id="8T4G">
    <property type="method" value="EM"/>
    <property type="resolution" value="3.50 A"/>
    <property type="chains" value="B=1-686"/>
</dbReference>
<dbReference type="PDB" id="8T4H">
    <property type="method" value="EM"/>
    <property type="resolution" value="3.80 A"/>
    <property type="chains" value="B=1-686"/>
</dbReference>
<dbReference type="PDB" id="8T4I">
    <property type="method" value="EM"/>
    <property type="resolution" value="5.10 A"/>
    <property type="chains" value="B=1-686"/>
</dbReference>
<dbReference type="PDB" id="8T4J">
    <property type="method" value="EM"/>
    <property type="resolution" value="3.90 A"/>
    <property type="chains" value="B=1-686"/>
</dbReference>
<dbReference type="PDBsum" id="5U1D"/>
<dbReference type="PDBsum" id="8T46"/>
<dbReference type="PDBsum" id="8T4E"/>
<dbReference type="PDBsum" id="8T4F"/>
<dbReference type="PDBsum" id="8T4G"/>
<dbReference type="PDBsum" id="8T4H"/>
<dbReference type="PDBsum" id="8T4I"/>
<dbReference type="PDBsum" id="8T4J"/>
<dbReference type="EMDB" id="EMD-41021"/>
<dbReference type="EMDB" id="EMD-41028"/>
<dbReference type="EMDB" id="EMD-41029"/>
<dbReference type="EMDB" id="EMD-41030"/>
<dbReference type="EMDB" id="EMD-41031"/>
<dbReference type="EMDB" id="EMD-41032"/>
<dbReference type="EMDB" id="EMD-41033"/>
<dbReference type="EMDB" id="EMD-8482"/>
<dbReference type="SMR" id="Q03519"/>
<dbReference type="BioGRID" id="112754">
    <property type="interactions" value="150"/>
</dbReference>
<dbReference type="DIP" id="DIP-322N"/>
<dbReference type="FunCoup" id="Q03519">
    <property type="interactions" value="656"/>
</dbReference>
<dbReference type="IntAct" id="Q03519">
    <property type="interactions" value="72"/>
</dbReference>
<dbReference type="MINT" id="Q03519"/>
<dbReference type="STRING" id="9606.ENSP00000364032"/>
<dbReference type="ChEMBL" id="CHEMBL4523654"/>
<dbReference type="TCDB" id="3.A.1.209.1">
    <property type="family name" value="the atp-binding cassette (abc) superfamily"/>
</dbReference>
<dbReference type="GlyGen" id="Q03519">
    <property type="glycosylation" value="1 site, 1 O-linked glycan (1 site)"/>
</dbReference>
<dbReference type="iPTMnet" id="Q03519"/>
<dbReference type="PhosphoSitePlus" id="Q03519"/>
<dbReference type="SwissPalm" id="Q03519"/>
<dbReference type="BioMuta" id="TAP2"/>
<dbReference type="DMDM" id="549044"/>
<dbReference type="CPTAC" id="CPTAC-5973"/>
<dbReference type="jPOST" id="Q03519"/>
<dbReference type="MassIVE" id="Q03519"/>
<dbReference type="PaxDb" id="9606-ENSP00000364034"/>
<dbReference type="PeptideAtlas" id="Q03519"/>
<dbReference type="ProteomicsDB" id="58215">
    <molecule id="Q03519-1"/>
</dbReference>
<dbReference type="ProteomicsDB" id="58216">
    <molecule id="Q03519-2"/>
</dbReference>
<dbReference type="ProteomicsDB" id="62921"/>
<dbReference type="Pumba" id="Q03519"/>
<dbReference type="TopDownProteomics" id="Q03519-2">
    <molecule id="Q03519-2"/>
</dbReference>
<dbReference type="Antibodypedia" id="684">
    <property type="antibodies" value="232 antibodies from 33 providers"/>
</dbReference>
<dbReference type="CPTC" id="Q03519">
    <property type="antibodies" value="1 antibody"/>
</dbReference>
<dbReference type="DNASU" id="6891"/>
<dbReference type="Ensembl" id="ENST00000374897.4">
    <molecule id="Q03519-1"/>
    <property type="protein sequence ID" value="ENSP00000364032.3"/>
    <property type="gene ID" value="ENSG00000204267.19"/>
</dbReference>
<dbReference type="Ensembl" id="ENST00000383118.8">
    <molecule id="Q03519-1"/>
    <property type="protein sequence ID" value="ENSP00000372599.4"/>
    <property type="gene ID" value="ENSG00000206235.8"/>
</dbReference>
<dbReference type="Ensembl" id="ENST00000383119.8">
    <molecule id="Q03519-2"/>
    <property type="protein sequence ID" value="ENSP00000372600.4"/>
    <property type="gene ID" value="ENSG00000206235.8"/>
</dbReference>
<dbReference type="Ensembl" id="ENST00000383239.8">
    <molecule id="Q03519-1"/>
    <property type="protein sequence ID" value="ENSP00000372726.4"/>
    <property type="gene ID" value="ENSG00000206299.8"/>
</dbReference>
<dbReference type="Ensembl" id="ENST00000383240.8">
    <molecule id="Q03519-2"/>
    <property type="protein sequence ID" value="ENSP00000372727.4"/>
    <property type="gene ID" value="ENSG00000206299.8"/>
</dbReference>
<dbReference type="Ensembl" id="ENST00000414145.6">
    <molecule id="Q03519-2"/>
    <property type="protein sequence ID" value="ENSP00000401377.2"/>
    <property type="gene ID" value="ENSG00000228582.9"/>
</dbReference>
<dbReference type="Ensembl" id="ENST00000419142.6">
    <property type="protein sequence ID" value="ENSP00000390013.2"/>
    <property type="gene ID" value="ENSG00000237599.9"/>
</dbReference>
<dbReference type="Ensembl" id="ENST00000426977.2">
    <molecule id="Q03519-2"/>
    <property type="protein sequence ID" value="ENSP00000387553.2"/>
    <property type="gene ID" value="ENSG00000232326.9"/>
</dbReference>
<dbReference type="Ensembl" id="ENST00000439425.6">
    <molecule id="Q03519-2"/>
    <property type="protein sequence ID" value="ENSP00000396156.2"/>
    <property type="gene ID" value="ENSG00000225967.9"/>
</dbReference>
<dbReference type="Ensembl" id="ENST00000443713.6">
    <molecule id="Q03519-1"/>
    <property type="protein sequence ID" value="ENSP00000394101.2"/>
    <property type="gene ID" value="ENSG00000228582.9"/>
</dbReference>
<dbReference type="Ensembl" id="ENST00000451907.2">
    <molecule id="Q03519-2"/>
    <property type="protein sequence ID" value="ENSP00000392172.2"/>
    <property type="gene ID" value="ENSG00000223481.9"/>
</dbReference>
<dbReference type="Ensembl" id="ENST00000652259.1">
    <molecule id="Q03519-2"/>
    <property type="protein sequence ID" value="ENSP00000498827.1"/>
    <property type="gene ID" value="ENSG00000204267.19"/>
</dbReference>
<dbReference type="Ensembl" id="ENST00000698440.1">
    <molecule id="Q03519-1"/>
    <property type="protein sequence ID" value="ENSP00000513722.1"/>
    <property type="gene ID" value="ENSG00000204267.19"/>
</dbReference>
<dbReference type="Ensembl" id="ENST00000698448.1">
    <molecule id="Q03519-1"/>
    <property type="protein sequence ID" value="ENSP00000513733.1"/>
    <property type="gene ID" value="ENSG00000204267.19"/>
</dbReference>
<dbReference type="GeneID" id="6891"/>
<dbReference type="KEGG" id="hsa:6891"/>
<dbReference type="MANE-Select" id="ENST00000374897.4">
    <property type="protein sequence ID" value="ENSP00000364032.3"/>
    <property type="RefSeq nucleotide sequence ID" value="NM_001290043.2"/>
    <property type="RefSeq protein sequence ID" value="NP_001276972.1"/>
</dbReference>
<dbReference type="UCSC" id="uc063yci.1">
    <molecule id="Q03519-1"/>
    <property type="organism name" value="human"/>
</dbReference>
<dbReference type="AGR" id="HGNC:44"/>
<dbReference type="CTD" id="6891"/>
<dbReference type="DisGeNET" id="6891"/>
<dbReference type="GeneCards" id="TAP2"/>
<dbReference type="HGNC" id="HGNC:44">
    <property type="gene designation" value="TAP2"/>
</dbReference>
<dbReference type="HPA" id="ENSG00000204267">
    <property type="expression patterns" value="Low tissue specificity"/>
</dbReference>
<dbReference type="MalaCards" id="TAP2"/>
<dbReference type="MIM" id="170261">
    <property type="type" value="gene"/>
</dbReference>
<dbReference type="MIM" id="620813">
    <property type="type" value="phenotype"/>
</dbReference>
<dbReference type="neXtProt" id="NX_Q03519"/>
<dbReference type="OpenTargets" id="ENSG00000204267"/>
<dbReference type="Orphanet" id="34592">
    <property type="disease" value="Immunodeficiency by defective expression of MHC class I"/>
</dbReference>
<dbReference type="PharmGKB" id="PA35022"/>
<dbReference type="VEuPathDB" id="HostDB:ENSG00000204267"/>
<dbReference type="eggNOG" id="KOG0058">
    <property type="taxonomic scope" value="Eukaryota"/>
</dbReference>
<dbReference type="GeneTree" id="ENSGT00940000160499"/>
<dbReference type="HOGENOM" id="CLU_000604_84_3_1"/>
<dbReference type="InParanoid" id="Q03519"/>
<dbReference type="OMA" id="ERQRMTI"/>
<dbReference type="OrthoDB" id="6500128at2759"/>
<dbReference type="PAN-GO" id="Q03519">
    <property type="GO annotations" value="8 GO annotations based on evolutionary models"/>
</dbReference>
<dbReference type="PhylomeDB" id="Q03519"/>
<dbReference type="TreeFam" id="TF105197"/>
<dbReference type="BRENDA" id="7.4.2.14">
    <property type="organism ID" value="2681"/>
</dbReference>
<dbReference type="BRENDA" id="7.4.2.5">
    <property type="organism ID" value="2681"/>
</dbReference>
<dbReference type="PathwayCommons" id="Q03519"/>
<dbReference type="Reactome" id="R-HSA-1236974">
    <property type="pathway name" value="ER-Phagosome pathway"/>
</dbReference>
<dbReference type="Reactome" id="R-HSA-983170">
    <property type="pathway name" value="Antigen Presentation: Folding, assembly and peptide loading of class I MHC"/>
</dbReference>
<dbReference type="SignaLink" id="Q03519"/>
<dbReference type="BioGRID-ORCS" id="6891">
    <property type="hits" value="21 hits in 1162 CRISPR screens"/>
</dbReference>
<dbReference type="GeneWiki" id="TAP2"/>
<dbReference type="GenomeRNAi" id="6891"/>
<dbReference type="Pharos" id="Q03519">
    <property type="development level" value="Tbio"/>
</dbReference>
<dbReference type="PRO" id="PR:Q03519"/>
<dbReference type="Proteomes" id="UP000005640">
    <property type="component" value="Chromosome 6"/>
</dbReference>
<dbReference type="RNAct" id="Q03519">
    <property type="molecule type" value="protein"/>
</dbReference>
<dbReference type="Bgee" id="ENSG00000204267">
    <property type="expression patterns" value="Expressed in vermiform appendix and 97 other cell types or tissues"/>
</dbReference>
<dbReference type="ExpressionAtlas" id="Q03519">
    <property type="expression patterns" value="baseline and differential"/>
</dbReference>
<dbReference type="GO" id="GO:0005783">
    <property type="term" value="C:endoplasmic reticulum"/>
    <property type="evidence" value="ECO:0000314"/>
    <property type="project" value="HPA"/>
</dbReference>
<dbReference type="GO" id="GO:0005789">
    <property type="term" value="C:endoplasmic reticulum membrane"/>
    <property type="evidence" value="ECO:0000314"/>
    <property type="project" value="UniProtKB"/>
</dbReference>
<dbReference type="GO" id="GO:0033116">
    <property type="term" value="C:endoplasmic reticulum-Golgi intermediate compartment membrane"/>
    <property type="evidence" value="ECO:0000304"/>
    <property type="project" value="Reactome"/>
</dbReference>
<dbReference type="GO" id="GO:0016020">
    <property type="term" value="C:membrane"/>
    <property type="evidence" value="ECO:0000314"/>
    <property type="project" value="UniProtKB"/>
</dbReference>
<dbReference type="GO" id="GO:0042824">
    <property type="term" value="C:MHC class I peptide loading complex"/>
    <property type="evidence" value="ECO:0000314"/>
    <property type="project" value="UniProtKB"/>
</dbReference>
<dbReference type="GO" id="GO:0016607">
    <property type="term" value="C:nuclear speck"/>
    <property type="evidence" value="ECO:0000314"/>
    <property type="project" value="HPA"/>
</dbReference>
<dbReference type="GO" id="GO:0030670">
    <property type="term" value="C:phagocytic vesicle membrane"/>
    <property type="evidence" value="ECO:0000304"/>
    <property type="project" value="Reactome"/>
</dbReference>
<dbReference type="GO" id="GO:0042825">
    <property type="term" value="C:TAP complex"/>
    <property type="evidence" value="ECO:0000314"/>
    <property type="project" value="UniProtKB"/>
</dbReference>
<dbReference type="GO" id="GO:0015433">
    <property type="term" value="F:ABC-type peptide antigen transporter activity"/>
    <property type="evidence" value="ECO:0000314"/>
    <property type="project" value="UniProtKB"/>
</dbReference>
<dbReference type="GO" id="GO:0015440">
    <property type="term" value="F:ABC-type peptide transporter activity"/>
    <property type="evidence" value="ECO:0000318"/>
    <property type="project" value="GO_Central"/>
</dbReference>
<dbReference type="GO" id="GO:0005524">
    <property type="term" value="F:ATP binding"/>
    <property type="evidence" value="ECO:0000314"/>
    <property type="project" value="UniProtKB"/>
</dbReference>
<dbReference type="GO" id="GO:0016887">
    <property type="term" value="F:ATP hydrolysis activity"/>
    <property type="evidence" value="ECO:0007669"/>
    <property type="project" value="InterPro"/>
</dbReference>
<dbReference type="GO" id="GO:0046872">
    <property type="term" value="F:metal ion binding"/>
    <property type="evidence" value="ECO:0007669"/>
    <property type="project" value="UniProtKB-KW"/>
</dbReference>
<dbReference type="GO" id="GO:0023029">
    <property type="term" value="F:MHC class Ib protein binding"/>
    <property type="evidence" value="ECO:0000353"/>
    <property type="project" value="UniProtKB"/>
</dbReference>
<dbReference type="GO" id="GO:0042605">
    <property type="term" value="F:peptide antigen binding"/>
    <property type="evidence" value="ECO:0000314"/>
    <property type="project" value="UniProtKB"/>
</dbReference>
<dbReference type="GO" id="GO:1904680">
    <property type="term" value="F:peptide transmembrane transporter activity"/>
    <property type="evidence" value="ECO:0000316"/>
    <property type="project" value="UniProt"/>
</dbReference>
<dbReference type="GO" id="GO:0046978">
    <property type="term" value="F:TAP1 binding"/>
    <property type="evidence" value="ECO:0000353"/>
    <property type="project" value="UniProtKB"/>
</dbReference>
<dbReference type="GO" id="GO:0046980">
    <property type="term" value="F:tapasin binding"/>
    <property type="evidence" value="ECO:0000250"/>
    <property type="project" value="UniProtKB"/>
</dbReference>
<dbReference type="GO" id="GO:0019885">
    <property type="term" value="P:antigen processing and presentation of endogenous peptide antigen via MHC class I"/>
    <property type="evidence" value="ECO:0000314"/>
    <property type="project" value="UniProtKB"/>
</dbReference>
<dbReference type="GO" id="GO:0002485">
    <property type="term" value="P:antigen processing and presentation of endogenous peptide antigen via MHC class I via ER pathway, TAP-dependent"/>
    <property type="evidence" value="ECO:0007669"/>
    <property type="project" value="Ensembl"/>
</dbReference>
<dbReference type="GO" id="GO:0002489">
    <property type="term" value="P:antigen processing and presentation of endogenous peptide antigen via MHC class Ib via ER pathway, TAP-dependent"/>
    <property type="evidence" value="ECO:0000315"/>
    <property type="project" value="UniProtKB"/>
</dbReference>
<dbReference type="GO" id="GO:0002481">
    <property type="term" value="P:antigen processing and presentation of exogenous protein antigen via MHC class Ib, TAP-dependent"/>
    <property type="evidence" value="ECO:0007669"/>
    <property type="project" value="Ensembl"/>
</dbReference>
<dbReference type="GO" id="GO:0046967">
    <property type="term" value="P:cytosol to endoplasmic reticulum transport"/>
    <property type="evidence" value="ECO:0000315"/>
    <property type="project" value="UniProtKB"/>
</dbReference>
<dbReference type="GO" id="GO:0046968">
    <property type="term" value="P:peptide antigen transport"/>
    <property type="evidence" value="ECO:0000314"/>
    <property type="project" value="UniProtKB"/>
</dbReference>
<dbReference type="GO" id="GO:0001916">
    <property type="term" value="P:positive regulation of T cell mediated cytotoxicity"/>
    <property type="evidence" value="ECO:0007669"/>
    <property type="project" value="Ensembl"/>
</dbReference>
<dbReference type="GO" id="GO:0015031">
    <property type="term" value="P:protein transport"/>
    <property type="evidence" value="ECO:0007669"/>
    <property type="project" value="UniProtKB-KW"/>
</dbReference>
<dbReference type="GO" id="GO:0002237">
    <property type="term" value="P:response to molecule of bacterial origin"/>
    <property type="evidence" value="ECO:0007669"/>
    <property type="project" value="Ensembl"/>
</dbReference>
<dbReference type="GO" id="GO:0001913">
    <property type="term" value="P:T cell mediated cytotoxicity"/>
    <property type="evidence" value="ECO:0007669"/>
    <property type="project" value="Ensembl"/>
</dbReference>
<dbReference type="GO" id="GO:0055085">
    <property type="term" value="P:transmembrane transport"/>
    <property type="evidence" value="ECO:0000318"/>
    <property type="project" value="GO_Central"/>
</dbReference>
<dbReference type="CDD" id="cd18590">
    <property type="entry name" value="ABC_6TM_TAP2"/>
    <property type="match status" value="1"/>
</dbReference>
<dbReference type="CDD" id="cd03248">
    <property type="entry name" value="ABCC_TAP"/>
    <property type="match status" value="1"/>
</dbReference>
<dbReference type="DisProt" id="DP02210"/>
<dbReference type="FunFam" id="1.20.1560.10:FF:000042">
    <property type="entry name" value="Antigen peptide transporter 2"/>
    <property type="match status" value="1"/>
</dbReference>
<dbReference type="FunFam" id="3.40.50.300:FF:000140">
    <property type="entry name" value="Lipid A export ATP-binding/permease protein MsbA"/>
    <property type="match status" value="1"/>
</dbReference>
<dbReference type="Gene3D" id="1.20.1560.10">
    <property type="entry name" value="ABC transporter type 1, transmembrane domain"/>
    <property type="match status" value="1"/>
</dbReference>
<dbReference type="Gene3D" id="3.40.50.300">
    <property type="entry name" value="P-loop containing nucleotide triphosphate hydrolases"/>
    <property type="match status" value="1"/>
</dbReference>
<dbReference type="InterPro" id="IPR003593">
    <property type="entry name" value="AAA+_ATPase"/>
</dbReference>
<dbReference type="InterPro" id="IPR011527">
    <property type="entry name" value="ABC1_TM_dom"/>
</dbReference>
<dbReference type="InterPro" id="IPR036640">
    <property type="entry name" value="ABC1_TM_sf"/>
</dbReference>
<dbReference type="InterPro" id="IPR013305">
    <property type="entry name" value="ABC_Tap-like"/>
</dbReference>
<dbReference type="InterPro" id="IPR003439">
    <property type="entry name" value="ABC_transporter-like_ATP-bd"/>
</dbReference>
<dbReference type="InterPro" id="IPR017871">
    <property type="entry name" value="ABC_transporter-like_CS"/>
</dbReference>
<dbReference type="InterPro" id="IPR027417">
    <property type="entry name" value="P-loop_NTPase"/>
</dbReference>
<dbReference type="InterPro" id="IPR005293">
    <property type="entry name" value="Tap2/ABCB3"/>
</dbReference>
<dbReference type="InterPro" id="IPR039421">
    <property type="entry name" value="Type_1_exporter"/>
</dbReference>
<dbReference type="NCBIfam" id="TIGR00958">
    <property type="entry name" value="3a01208"/>
    <property type="match status" value="1"/>
</dbReference>
<dbReference type="PANTHER" id="PTHR43394">
    <property type="entry name" value="ATP-DEPENDENT PERMEASE MDL1, MITOCHONDRIAL"/>
    <property type="match status" value="1"/>
</dbReference>
<dbReference type="PANTHER" id="PTHR43394:SF14">
    <property type="entry name" value="TRANSPORTER 2, ATP BINDING CASSETTE SUBFAMILY B"/>
    <property type="match status" value="1"/>
</dbReference>
<dbReference type="Pfam" id="PF00664">
    <property type="entry name" value="ABC_membrane"/>
    <property type="match status" value="1"/>
</dbReference>
<dbReference type="Pfam" id="PF00005">
    <property type="entry name" value="ABC_tran"/>
    <property type="match status" value="1"/>
</dbReference>
<dbReference type="PIRSF" id="PIRSF002773">
    <property type="entry name" value="ABC_prm/ATPase_B"/>
    <property type="match status" value="1"/>
</dbReference>
<dbReference type="PRINTS" id="PR01897">
    <property type="entry name" value="TAP2PROTEIN"/>
</dbReference>
<dbReference type="SMART" id="SM00382">
    <property type="entry name" value="AAA"/>
    <property type="match status" value="1"/>
</dbReference>
<dbReference type="SUPFAM" id="SSF90123">
    <property type="entry name" value="ABC transporter transmembrane region"/>
    <property type="match status" value="1"/>
</dbReference>
<dbReference type="SUPFAM" id="SSF52540">
    <property type="entry name" value="P-loop containing nucleoside triphosphate hydrolases"/>
    <property type="match status" value="1"/>
</dbReference>
<dbReference type="PROSITE" id="PS50929">
    <property type="entry name" value="ABC_TM1F"/>
    <property type="match status" value="1"/>
</dbReference>
<dbReference type="PROSITE" id="PS00211">
    <property type="entry name" value="ABC_TRANSPORTER_1"/>
    <property type="match status" value="1"/>
</dbReference>
<dbReference type="PROSITE" id="PS50893">
    <property type="entry name" value="ABC_TRANSPORTER_2"/>
    <property type="match status" value="1"/>
</dbReference>